<dbReference type="EC" id="6.3.4.5" evidence="1"/>
<dbReference type="EMBL" id="CP001044">
    <property type="protein sequence ID" value="ACC74576.1"/>
    <property type="molecule type" value="Genomic_DNA"/>
</dbReference>
<dbReference type="RefSeq" id="WP_012404740.1">
    <property type="nucleotide sequence ID" value="NC_010623.1"/>
</dbReference>
<dbReference type="SMR" id="B2JP23"/>
<dbReference type="STRING" id="391038.Bphy_5499"/>
<dbReference type="KEGG" id="bph:Bphy_5499"/>
<dbReference type="eggNOG" id="COG0137">
    <property type="taxonomic scope" value="Bacteria"/>
</dbReference>
<dbReference type="HOGENOM" id="CLU_032784_4_1_4"/>
<dbReference type="OrthoDB" id="9801641at2"/>
<dbReference type="UniPathway" id="UPA00068">
    <property type="reaction ID" value="UER00113"/>
</dbReference>
<dbReference type="Proteomes" id="UP000001192">
    <property type="component" value="Chromosome 2"/>
</dbReference>
<dbReference type="GO" id="GO:0005737">
    <property type="term" value="C:cytoplasm"/>
    <property type="evidence" value="ECO:0007669"/>
    <property type="project" value="UniProtKB-SubCell"/>
</dbReference>
<dbReference type="GO" id="GO:0004055">
    <property type="term" value="F:argininosuccinate synthase activity"/>
    <property type="evidence" value="ECO:0007669"/>
    <property type="project" value="UniProtKB-UniRule"/>
</dbReference>
<dbReference type="GO" id="GO:0005524">
    <property type="term" value="F:ATP binding"/>
    <property type="evidence" value="ECO:0007669"/>
    <property type="project" value="UniProtKB-UniRule"/>
</dbReference>
<dbReference type="GO" id="GO:0042803">
    <property type="term" value="F:protein homodimerization activity"/>
    <property type="evidence" value="ECO:0007669"/>
    <property type="project" value="InterPro"/>
</dbReference>
<dbReference type="GO" id="GO:0000053">
    <property type="term" value="P:argininosuccinate metabolic process"/>
    <property type="evidence" value="ECO:0007669"/>
    <property type="project" value="TreeGrafter"/>
</dbReference>
<dbReference type="GO" id="GO:0006526">
    <property type="term" value="P:L-arginine biosynthetic process"/>
    <property type="evidence" value="ECO:0007669"/>
    <property type="project" value="UniProtKB-UniRule"/>
</dbReference>
<dbReference type="GO" id="GO:0000050">
    <property type="term" value="P:urea cycle"/>
    <property type="evidence" value="ECO:0007669"/>
    <property type="project" value="TreeGrafter"/>
</dbReference>
<dbReference type="CDD" id="cd01999">
    <property type="entry name" value="ASS"/>
    <property type="match status" value="1"/>
</dbReference>
<dbReference type="FunFam" id="1.10.287.400:FF:000001">
    <property type="entry name" value="Argininosuccinate synthase"/>
    <property type="match status" value="1"/>
</dbReference>
<dbReference type="Gene3D" id="1.10.287.400">
    <property type="match status" value="1"/>
</dbReference>
<dbReference type="Gene3D" id="3.90.1260.10">
    <property type="entry name" value="Argininosuccinate synthetase, chain A, domain 2"/>
    <property type="match status" value="1"/>
</dbReference>
<dbReference type="Gene3D" id="3.40.50.620">
    <property type="entry name" value="HUPs"/>
    <property type="match status" value="1"/>
</dbReference>
<dbReference type="HAMAP" id="MF_00581">
    <property type="entry name" value="Arg_succ_synth_type2"/>
    <property type="match status" value="1"/>
</dbReference>
<dbReference type="InterPro" id="IPR023437">
    <property type="entry name" value="Arg_succ_synth_type2_subfam"/>
</dbReference>
<dbReference type="InterPro" id="IPR048268">
    <property type="entry name" value="Arginosuc_syn_C"/>
</dbReference>
<dbReference type="InterPro" id="IPR048267">
    <property type="entry name" value="Arginosuc_syn_N"/>
</dbReference>
<dbReference type="InterPro" id="IPR001518">
    <property type="entry name" value="Arginosuc_synth"/>
</dbReference>
<dbReference type="InterPro" id="IPR018223">
    <property type="entry name" value="Arginosuc_synth_CS"/>
</dbReference>
<dbReference type="InterPro" id="IPR023434">
    <property type="entry name" value="Arginosuc_synth_type_1_subfam"/>
</dbReference>
<dbReference type="InterPro" id="IPR024074">
    <property type="entry name" value="AS_cat/multimer_dom_body"/>
</dbReference>
<dbReference type="InterPro" id="IPR024073">
    <property type="entry name" value="AS_multimer_C_tail"/>
</dbReference>
<dbReference type="InterPro" id="IPR014729">
    <property type="entry name" value="Rossmann-like_a/b/a_fold"/>
</dbReference>
<dbReference type="NCBIfam" id="TIGR00032">
    <property type="entry name" value="argG"/>
    <property type="match status" value="1"/>
</dbReference>
<dbReference type="NCBIfam" id="NF003779">
    <property type="entry name" value="PRK05370.1"/>
    <property type="match status" value="1"/>
</dbReference>
<dbReference type="PANTHER" id="PTHR11587">
    <property type="entry name" value="ARGININOSUCCINATE SYNTHASE"/>
    <property type="match status" value="1"/>
</dbReference>
<dbReference type="PANTHER" id="PTHR11587:SF2">
    <property type="entry name" value="ARGININOSUCCINATE SYNTHASE"/>
    <property type="match status" value="1"/>
</dbReference>
<dbReference type="Pfam" id="PF20979">
    <property type="entry name" value="Arginosuc_syn_C"/>
    <property type="match status" value="1"/>
</dbReference>
<dbReference type="Pfam" id="PF00764">
    <property type="entry name" value="Arginosuc_synth"/>
    <property type="match status" value="1"/>
</dbReference>
<dbReference type="SUPFAM" id="SSF52402">
    <property type="entry name" value="Adenine nucleotide alpha hydrolases-like"/>
    <property type="match status" value="1"/>
</dbReference>
<dbReference type="SUPFAM" id="SSF69864">
    <property type="entry name" value="Argininosuccinate synthetase, C-terminal domain"/>
    <property type="match status" value="1"/>
</dbReference>
<dbReference type="PROSITE" id="PS00564">
    <property type="entry name" value="ARGININOSUCCIN_SYN_1"/>
    <property type="match status" value="1"/>
</dbReference>
<dbReference type="PROSITE" id="PS00565">
    <property type="entry name" value="ARGININOSUCCIN_SYN_2"/>
    <property type="match status" value="1"/>
</dbReference>
<comment type="catalytic activity">
    <reaction evidence="1">
        <text>L-citrulline + L-aspartate + ATP = 2-(N(omega)-L-arginino)succinate + AMP + diphosphate + H(+)</text>
        <dbReference type="Rhea" id="RHEA:10932"/>
        <dbReference type="ChEBI" id="CHEBI:15378"/>
        <dbReference type="ChEBI" id="CHEBI:29991"/>
        <dbReference type="ChEBI" id="CHEBI:30616"/>
        <dbReference type="ChEBI" id="CHEBI:33019"/>
        <dbReference type="ChEBI" id="CHEBI:57472"/>
        <dbReference type="ChEBI" id="CHEBI:57743"/>
        <dbReference type="ChEBI" id="CHEBI:456215"/>
        <dbReference type="EC" id="6.3.4.5"/>
    </reaction>
</comment>
<comment type="pathway">
    <text evidence="1">Amino-acid biosynthesis; L-arginine biosynthesis; L-arginine from L-ornithine and carbamoyl phosphate: step 2/3.</text>
</comment>
<comment type="subunit">
    <text evidence="1">Homotetramer.</text>
</comment>
<comment type="subcellular location">
    <subcellularLocation>
        <location evidence="1">Cytoplasm</location>
    </subcellularLocation>
</comment>
<comment type="similarity">
    <text evidence="1">Belongs to the argininosuccinate synthase family. Type 2 subfamily.</text>
</comment>
<protein>
    <recommendedName>
        <fullName evidence="1">Argininosuccinate synthase</fullName>
        <ecNumber evidence="1">6.3.4.5</ecNumber>
    </recommendedName>
    <alternativeName>
        <fullName evidence="1">Citrulline--aspartate ligase</fullName>
    </alternativeName>
</protein>
<sequence>MSTILESLPTGQKVGIAFSGGLDTSAALHWMRLKGAVPYAYTANLGQPDEDDYDSIPRRATEYGAEGARLIDCRAQLVAEGIAALQSGAFHISTAGVTYFNTTPIGRAVTGTMLVAAMKEDGVNIWGDGSTYKGNDIERFYRYGLLVNPDLKIYKPWLDQTFIDELGGRAEMSEFMRQSGFAYKMSAEKAYSTDSNLLGATHEAKDLESLESGIKIVNPIMGVAFWRDDVQIAKEEVTVRFEEGQPVALNGKTFPNAVELLLEANRIGGRHGLGMSDQIENRIIEAKSRGIYEAPGLALLFAAYERLVTGIHNEDTIEQYRESGRRLGRLLYQGRWFDPQAIMLRETAQRWVARAITGEVTLELRRGNDYSILSTKSPNLTYQPERLSMEKVASTFSPRDRIGQLTMRNLDITDTRDKLRVYSQVGLLAPGEASALPQIKGDKE</sequence>
<accession>B2JP23</accession>
<proteinExistence type="inferred from homology"/>
<organism>
    <name type="scientific">Paraburkholderia phymatum (strain DSM 17167 / CIP 108236 / LMG 21445 / STM815)</name>
    <name type="common">Burkholderia phymatum</name>
    <dbReference type="NCBI Taxonomy" id="391038"/>
    <lineage>
        <taxon>Bacteria</taxon>
        <taxon>Pseudomonadati</taxon>
        <taxon>Pseudomonadota</taxon>
        <taxon>Betaproteobacteria</taxon>
        <taxon>Burkholderiales</taxon>
        <taxon>Burkholderiaceae</taxon>
        <taxon>Paraburkholderia</taxon>
    </lineage>
</organism>
<name>ASSY_PARP8</name>
<keyword id="KW-0028">Amino-acid biosynthesis</keyword>
<keyword id="KW-0055">Arginine biosynthesis</keyword>
<keyword id="KW-0067">ATP-binding</keyword>
<keyword id="KW-0963">Cytoplasm</keyword>
<keyword id="KW-0436">Ligase</keyword>
<keyword id="KW-0547">Nucleotide-binding</keyword>
<keyword id="KW-1185">Reference proteome</keyword>
<gene>
    <name evidence="1" type="primary">argG</name>
    <name type="ordered locus">Bphy_5499</name>
</gene>
<feature type="chain" id="PRO_1000129742" description="Argininosuccinate synthase">
    <location>
        <begin position="1"/>
        <end position="444"/>
    </location>
</feature>
<feature type="binding site" evidence="1">
    <location>
        <begin position="17"/>
        <end position="25"/>
    </location>
    <ligand>
        <name>ATP</name>
        <dbReference type="ChEBI" id="CHEBI:30616"/>
    </ligand>
</feature>
<feature type="binding site" evidence="1">
    <location>
        <position position="43"/>
    </location>
    <ligand>
        <name>ATP</name>
        <dbReference type="ChEBI" id="CHEBI:30616"/>
    </ligand>
</feature>
<feature type="binding site" evidence="1">
    <location>
        <position position="99"/>
    </location>
    <ligand>
        <name>L-citrulline</name>
        <dbReference type="ChEBI" id="CHEBI:57743"/>
    </ligand>
</feature>
<feature type="binding site" evidence="1">
    <location>
        <position position="129"/>
    </location>
    <ligand>
        <name>ATP</name>
        <dbReference type="ChEBI" id="CHEBI:30616"/>
    </ligand>
</feature>
<feature type="binding site" evidence="1">
    <location>
        <position position="131"/>
    </location>
    <ligand>
        <name>ATP</name>
        <dbReference type="ChEBI" id="CHEBI:30616"/>
    </ligand>
</feature>
<feature type="binding site" evidence="1">
    <location>
        <position position="131"/>
    </location>
    <ligand>
        <name>L-aspartate</name>
        <dbReference type="ChEBI" id="CHEBI:29991"/>
    </ligand>
</feature>
<feature type="binding site" evidence="1">
    <location>
        <position position="135"/>
    </location>
    <ligand>
        <name>L-aspartate</name>
        <dbReference type="ChEBI" id="CHEBI:29991"/>
    </ligand>
</feature>
<feature type="binding site" evidence="1">
    <location>
        <position position="135"/>
    </location>
    <ligand>
        <name>L-citrulline</name>
        <dbReference type="ChEBI" id="CHEBI:57743"/>
    </ligand>
</feature>
<feature type="binding site" evidence="1">
    <location>
        <position position="136"/>
    </location>
    <ligand>
        <name>ATP</name>
        <dbReference type="ChEBI" id="CHEBI:30616"/>
    </ligand>
</feature>
<feature type="binding site" evidence="1">
    <location>
        <position position="136"/>
    </location>
    <ligand>
        <name>L-aspartate</name>
        <dbReference type="ChEBI" id="CHEBI:29991"/>
    </ligand>
</feature>
<feature type="binding site" evidence="1">
    <location>
        <position position="139"/>
    </location>
    <ligand>
        <name>L-citrulline</name>
        <dbReference type="ChEBI" id="CHEBI:57743"/>
    </ligand>
</feature>
<feature type="binding site" evidence="1">
    <location>
        <position position="192"/>
    </location>
    <ligand>
        <name>L-citrulline</name>
        <dbReference type="ChEBI" id="CHEBI:57743"/>
    </ligand>
</feature>
<feature type="binding site" evidence="1">
    <location>
        <position position="194"/>
    </location>
    <ligand>
        <name>ATP</name>
        <dbReference type="ChEBI" id="CHEBI:30616"/>
    </ligand>
</feature>
<feature type="binding site" evidence="1">
    <location>
        <position position="201"/>
    </location>
    <ligand>
        <name>L-citrulline</name>
        <dbReference type="ChEBI" id="CHEBI:57743"/>
    </ligand>
</feature>
<feature type="binding site" evidence="1">
    <location>
        <position position="203"/>
    </location>
    <ligand>
        <name>L-citrulline</name>
        <dbReference type="ChEBI" id="CHEBI:57743"/>
    </ligand>
</feature>
<feature type="binding site" evidence="1">
    <location>
        <position position="280"/>
    </location>
    <ligand>
        <name>L-citrulline</name>
        <dbReference type="ChEBI" id="CHEBI:57743"/>
    </ligand>
</feature>
<reference key="1">
    <citation type="journal article" date="2014" name="Stand. Genomic Sci.">
        <title>Complete genome sequence of Burkholderia phymatum STM815(T), a broad host range and efficient nitrogen-fixing symbiont of Mimosa species.</title>
        <authorList>
            <person name="Moulin L."/>
            <person name="Klonowska A."/>
            <person name="Caroline B."/>
            <person name="Booth K."/>
            <person name="Vriezen J.A."/>
            <person name="Melkonian R."/>
            <person name="James E.K."/>
            <person name="Young J.P."/>
            <person name="Bena G."/>
            <person name="Hauser L."/>
            <person name="Land M."/>
            <person name="Kyrpides N."/>
            <person name="Bruce D."/>
            <person name="Chain P."/>
            <person name="Copeland A."/>
            <person name="Pitluck S."/>
            <person name="Woyke T."/>
            <person name="Lizotte-Waniewski M."/>
            <person name="Bristow J."/>
            <person name="Riley M."/>
        </authorList>
    </citation>
    <scope>NUCLEOTIDE SEQUENCE [LARGE SCALE GENOMIC DNA]</scope>
    <source>
        <strain>DSM 17167 / CIP 108236 / LMG 21445 / STM815</strain>
    </source>
</reference>
<evidence type="ECO:0000255" key="1">
    <source>
        <dbReference type="HAMAP-Rule" id="MF_00581"/>
    </source>
</evidence>